<dbReference type="EC" id="6.1.1.20"/>
<dbReference type="EMBL" id="AAFI02000012">
    <property type="protein sequence ID" value="EAL70078.1"/>
    <property type="molecule type" value="Genomic_DNA"/>
</dbReference>
<dbReference type="RefSeq" id="XP_643878.1">
    <property type="nucleotide sequence ID" value="XM_638786.1"/>
</dbReference>
<dbReference type="SMR" id="Q86A68"/>
<dbReference type="FunCoup" id="Q86A68">
    <property type="interactions" value="701"/>
</dbReference>
<dbReference type="STRING" id="44689.Q86A68"/>
<dbReference type="PaxDb" id="44689-DDB0231330"/>
<dbReference type="EnsemblProtists" id="EAL70078">
    <property type="protein sequence ID" value="EAL70078"/>
    <property type="gene ID" value="DDB_G0274371"/>
</dbReference>
<dbReference type="GeneID" id="8619304"/>
<dbReference type="KEGG" id="ddi:DDB_G0274371"/>
<dbReference type="dictyBase" id="DDB_G0274371">
    <property type="gene designation" value="mpheS"/>
</dbReference>
<dbReference type="VEuPathDB" id="AmoebaDB:DDB_G0274371"/>
<dbReference type="eggNOG" id="KOG2783">
    <property type="taxonomic scope" value="Eukaryota"/>
</dbReference>
<dbReference type="HOGENOM" id="CLU_022696_0_1_1"/>
<dbReference type="InParanoid" id="Q86A68"/>
<dbReference type="OMA" id="PISHYPQ"/>
<dbReference type="PhylomeDB" id="Q86A68"/>
<dbReference type="PRO" id="PR:Q86A68"/>
<dbReference type="Proteomes" id="UP000002195">
    <property type="component" value="Chromosome 2"/>
</dbReference>
<dbReference type="GO" id="GO:0005737">
    <property type="term" value="C:cytoplasm"/>
    <property type="evidence" value="ECO:0000318"/>
    <property type="project" value="GO_Central"/>
</dbReference>
<dbReference type="GO" id="GO:0005759">
    <property type="term" value="C:mitochondrial matrix"/>
    <property type="evidence" value="ECO:0007669"/>
    <property type="project" value="UniProtKB-SubCell"/>
</dbReference>
<dbReference type="GO" id="GO:0005739">
    <property type="term" value="C:mitochondrion"/>
    <property type="evidence" value="ECO:0000318"/>
    <property type="project" value="GO_Central"/>
</dbReference>
<dbReference type="GO" id="GO:0005524">
    <property type="term" value="F:ATP binding"/>
    <property type="evidence" value="ECO:0007669"/>
    <property type="project" value="UniProtKB-KW"/>
</dbReference>
<dbReference type="GO" id="GO:0004826">
    <property type="term" value="F:phenylalanine-tRNA ligase activity"/>
    <property type="evidence" value="ECO:0000250"/>
    <property type="project" value="UniProtKB"/>
</dbReference>
<dbReference type="GO" id="GO:0000049">
    <property type="term" value="F:tRNA binding"/>
    <property type="evidence" value="ECO:0000250"/>
    <property type="project" value="UniProtKB"/>
</dbReference>
<dbReference type="GO" id="GO:0006432">
    <property type="term" value="P:phenylalanyl-tRNA aminoacylation"/>
    <property type="evidence" value="ECO:0000250"/>
    <property type="project" value="UniProtKB"/>
</dbReference>
<dbReference type="GO" id="GO:0008033">
    <property type="term" value="P:tRNA processing"/>
    <property type="evidence" value="ECO:0000250"/>
    <property type="project" value="UniProtKB"/>
</dbReference>
<dbReference type="CDD" id="cd00496">
    <property type="entry name" value="PheRS_alpha_core"/>
    <property type="match status" value="1"/>
</dbReference>
<dbReference type="FunFam" id="3.30.70.380:FF:000009">
    <property type="match status" value="1"/>
</dbReference>
<dbReference type="FunFam" id="3.30.930.10:FF:000053">
    <property type="entry name" value="Phenylalanyl-tRNA synthetase mitochondrial"/>
    <property type="match status" value="1"/>
</dbReference>
<dbReference type="Gene3D" id="3.30.930.10">
    <property type="entry name" value="Bira Bifunctional Protein, Domain 2"/>
    <property type="match status" value="1"/>
</dbReference>
<dbReference type="Gene3D" id="3.30.70.380">
    <property type="entry name" value="Ferrodoxin-fold anticodon-binding domain"/>
    <property type="match status" value="1"/>
</dbReference>
<dbReference type="InterPro" id="IPR006195">
    <property type="entry name" value="aa-tRNA-synth_II"/>
</dbReference>
<dbReference type="InterPro" id="IPR045864">
    <property type="entry name" value="aa-tRNA-synth_II/BPL/LPL"/>
</dbReference>
<dbReference type="InterPro" id="IPR005121">
    <property type="entry name" value="Fdx_antiC-bd"/>
</dbReference>
<dbReference type="InterPro" id="IPR036690">
    <property type="entry name" value="Fdx_antiC-bd_sf"/>
</dbReference>
<dbReference type="InterPro" id="IPR002319">
    <property type="entry name" value="Phenylalanyl-tRNA_Synthase"/>
</dbReference>
<dbReference type="PANTHER" id="PTHR11538:SF41">
    <property type="entry name" value="PHENYLALANINE--TRNA LIGASE, MITOCHONDRIAL"/>
    <property type="match status" value="1"/>
</dbReference>
<dbReference type="PANTHER" id="PTHR11538">
    <property type="entry name" value="PHENYLALANYL-TRNA SYNTHETASE"/>
    <property type="match status" value="1"/>
</dbReference>
<dbReference type="Pfam" id="PF03147">
    <property type="entry name" value="FDX-ACB"/>
    <property type="match status" value="1"/>
</dbReference>
<dbReference type="Pfam" id="PF01409">
    <property type="entry name" value="tRNA-synt_2d"/>
    <property type="match status" value="2"/>
</dbReference>
<dbReference type="SMART" id="SM00896">
    <property type="entry name" value="FDX-ACB"/>
    <property type="match status" value="1"/>
</dbReference>
<dbReference type="SUPFAM" id="SSF54991">
    <property type="entry name" value="Anticodon-binding domain of PheRS"/>
    <property type="match status" value="1"/>
</dbReference>
<dbReference type="SUPFAM" id="SSF55681">
    <property type="entry name" value="Class II aaRS and biotin synthetases"/>
    <property type="match status" value="1"/>
</dbReference>
<dbReference type="PROSITE" id="PS50862">
    <property type="entry name" value="AA_TRNA_LIGASE_II"/>
    <property type="match status" value="1"/>
</dbReference>
<dbReference type="PROSITE" id="PS51447">
    <property type="entry name" value="FDX_ACB"/>
    <property type="match status" value="1"/>
</dbReference>
<sequence length="454" mass="53179">MIKILRNINNNIVNRYDGLNKSYLNINFYCSTTNNSSGKIDYTKLIPENGNISKSITEKIGKNLHCKRDHPLNIIKKKIQYHFQNKLSDEEHKFQFFDSFEPKVSVKENFDELLFPVDHVGRSPNDTYYFSKDQLLRTHTSAHQSQLLREQEKAFLVTGDVYRRDTIDAVHYPVFHQMEGVKVFKDKVNLAIDGKPFDETIDYYEDNNYKQLQSVKDVEKDLKQSLESMIRSVIGQDLQVRWIDAYFPFTSPSFEMEIYFQGQWLEVLGCGVVHPSIMNNCGLSNDRAWAFGIGLERLAMILFNIPDIRLFWTEDNRFHNQFKGVDKSISTSSSSSSSSSSSSSSTLSDIDIKGVQFQQFSKYPSCFKDVSFWLEDEENFHENKFYEFVRESCGDLVERVDLVDNFTNKKLNKTSHCYRIYYRSMDRNLTNEEIDILQFNLREKLENHLSVKLR</sequence>
<evidence type="ECO:0000250" key="1"/>
<evidence type="ECO:0000255" key="2"/>
<evidence type="ECO:0000255" key="3">
    <source>
        <dbReference type="PROSITE-ProRule" id="PRU00778"/>
    </source>
</evidence>
<evidence type="ECO:0000256" key="4">
    <source>
        <dbReference type="SAM" id="MobiDB-lite"/>
    </source>
</evidence>
<evidence type="ECO:0000305" key="5"/>
<comment type="function">
    <text evidence="1">Is responsible for the charging of tRNA(Phe) with phenylalanine in mitochondrial translation.</text>
</comment>
<comment type="catalytic activity">
    <reaction>
        <text>tRNA(Phe) + L-phenylalanine + ATP = L-phenylalanyl-tRNA(Phe) + AMP + diphosphate + H(+)</text>
        <dbReference type="Rhea" id="RHEA:19413"/>
        <dbReference type="Rhea" id="RHEA-COMP:9668"/>
        <dbReference type="Rhea" id="RHEA-COMP:9699"/>
        <dbReference type="ChEBI" id="CHEBI:15378"/>
        <dbReference type="ChEBI" id="CHEBI:30616"/>
        <dbReference type="ChEBI" id="CHEBI:33019"/>
        <dbReference type="ChEBI" id="CHEBI:58095"/>
        <dbReference type="ChEBI" id="CHEBI:78442"/>
        <dbReference type="ChEBI" id="CHEBI:78531"/>
        <dbReference type="ChEBI" id="CHEBI:456215"/>
        <dbReference type="EC" id="6.1.1.20"/>
    </reaction>
</comment>
<comment type="subunit">
    <text evidence="1">Monomer.</text>
</comment>
<comment type="subcellular location">
    <subcellularLocation>
        <location evidence="5">Mitochondrion matrix</location>
    </subcellularLocation>
</comment>
<comment type="similarity">
    <text evidence="5">Belongs to the class-II aminoacyl-tRNA synthetase family.</text>
</comment>
<reference key="1">
    <citation type="journal article" date="2002" name="Nature">
        <title>Sequence and analysis of chromosome 2 of Dictyostelium discoideum.</title>
        <authorList>
            <person name="Gloeckner G."/>
            <person name="Eichinger L."/>
            <person name="Szafranski K."/>
            <person name="Pachebat J.A."/>
            <person name="Bankier A.T."/>
            <person name="Dear P.H."/>
            <person name="Lehmann R."/>
            <person name="Baumgart C."/>
            <person name="Parra G."/>
            <person name="Abril J.F."/>
            <person name="Guigo R."/>
            <person name="Kumpf K."/>
            <person name="Tunggal B."/>
            <person name="Cox E.C."/>
            <person name="Quail M.A."/>
            <person name="Platzer M."/>
            <person name="Rosenthal A."/>
            <person name="Noegel A.A."/>
        </authorList>
    </citation>
    <scope>NUCLEOTIDE SEQUENCE [LARGE SCALE GENOMIC DNA]</scope>
    <source>
        <strain>AX4</strain>
    </source>
</reference>
<reference key="2">
    <citation type="journal article" date="2005" name="Nature">
        <title>The genome of the social amoeba Dictyostelium discoideum.</title>
        <authorList>
            <person name="Eichinger L."/>
            <person name="Pachebat J.A."/>
            <person name="Gloeckner G."/>
            <person name="Rajandream M.A."/>
            <person name="Sucgang R."/>
            <person name="Berriman M."/>
            <person name="Song J."/>
            <person name="Olsen R."/>
            <person name="Szafranski K."/>
            <person name="Xu Q."/>
            <person name="Tunggal B."/>
            <person name="Kummerfeld S."/>
            <person name="Madera M."/>
            <person name="Konfortov B.A."/>
            <person name="Rivero F."/>
            <person name="Bankier A.T."/>
            <person name="Lehmann R."/>
            <person name="Hamlin N."/>
            <person name="Davies R."/>
            <person name="Gaudet P."/>
            <person name="Fey P."/>
            <person name="Pilcher K."/>
            <person name="Chen G."/>
            <person name="Saunders D."/>
            <person name="Sodergren E.J."/>
            <person name="Davis P."/>
            <person name="Kerhornou A."/>
            <person name="Nie X."/>
            <person name="Hall N."/>
            <person name="Anjard C."/>
            <person name="Hemphill L."/>
            <person name="Bason N."/>
            <person name="Farbrother P."/>
            <person name="Desany B."/>
            <person name="Just E."/>
            <person name="Morio T."/>
            <person name="Rost R."/>
            <person name="Churcher C.M."/>
            <person name="Cooper J."/>
            <person name="Haydock S."/>
            <person name="van Driessche N."/>
            <person name="Cronin A."/>
            <person name="Goodhead I."/>
            <person name="Muzny D.M."/>
            <person name="Mourier T."/>
            <person name="Pain A."/>
            <person name="Lu M."/>
            <person name="Harper D."/>
            <person name="Lindsay R."/>
            <person name="Hauser H."/>
            <person name="James K.D."/>
            <person name="Quiles M."/>
            <person name="Madan Babu M."/>
            <person name="Saito T."/>
            <person name="Buchrieser C."/>
            <person name="Wardroper A."/>
            <person name="Felder M."/>
            <person name="Thangavelu M."/>
            <person name="Johnson D."/>
            <person name="Knights A."/>
            <person name="Loulseged H."/>
            <person name="Mungall K.L."/>
            <person name="Oliver K."/>
            <person name="Price C."/>
            <person name="Quail M.A."/>
            <person name="Urushihara H."/>
            <person name="Hernandez J."/>
            <person name="Rabbinowitsch E."/>
            <person name="Steffen D."/>
            <person name="Sanders M."/>
            <person name="Ma J."/>
            <person name="Kohara Y."/>
            <person name="Sharp S."/>
            <person name="Simmonds M.N."/>
            <person name="Spiegler S."/>
            <person name="Tivey A."/>
            <person name="Sugano S."/>
            <person name="White B."/>
            <person name="Walker D."/>
            <person name="Woodward J.R."/>
            <person name="Winckler T."/>
            <person name="Tanaka Y."/>
            <person name="Shaulsky G."/>
            <person name="Schleicher M."/>
            <person name="Weinstock G.M."/>
            <person name="Rosenthal A."/>
            <person name="Cox E.C."/>
            <person name="Chisholm R.L."/>
            <person name="Gibbs R.A."/>
            <person name="Loomis W.F."/>
            <person name="Platzer M."/>
            <person name="Kay R.R."/>
            <person name="Williams J.G."/>
            <person name="Dear P.H."/>
            <person name="Noegel A.A."/>
            <person name="Barrell B.G."/>
            <person name="Kuspa A."/>
        </authorList>
    </citation>
    <scope>NUCLEOTIDE SEQUENCE [LARGE SCALE GENOMIC DNA]</scope>
    <source>
        <strain>AX4</strain>
    </source>
</reference>
<feature type="transit peptide" description="Mitochondrion" evidence="2">
    <location>
        <begin position="1"/>
        <end status="unknown"/>
    </location>
</feature>
<feature type="chain" id="PRO_0000327805" description="Phenylalanine--tRNA ligase, mitochondrial">
    <location>
        <begin status="unknown"/>
        <end position="454"/>
    </location>
</feature>
<feature type="domain" description="FDX-ACB" evidence="3">
    <location>
        <begin position="361"/>
        <end position="454"/>
    </location>
</feature>
<feature type="region of interest" description="Disordered" evidence="4">
    <location>
        <begin position="327"/>
        <end position="347"/>
    </location>
</feature>
<feature type="compositionally biased region" description="Low complexity" evidence="4">
    <location>
        <begin position="328"/>
        <end position="347"/>
    </location>
</feature>
<feature type="binding site" evidence="1">
    <location>
        <begin position="141"/>
        <end position="144"/>
    </location>
    <ligand>
        <name>substrate</name>
    </ligand>
</feature>
<feature type="binding site" evidence="1">
    <location>
        <position position="163"/>
    </location>
    <ligand>
        <name>substrate</name>
    </ligand>
</feature>
<feature type="binding site" evidence="1">
    <location>
        <begin position="170"/>
        <end position="172"/>
    </location>
    <ligand>
        <name>substrate</name>
    </ligand>
</feature>
<feature type="binding site" evidence="1">
    <location>
        <begin position="177"/>
        <end position="179"/>
    </location>
    <ligand>
        <name>substrate</name>
    </ligand>
</feature>
<feature type="binding site" evidence="1">
    <location>
        <position position="266"/>
    </location>
    <ligand>
        <name>substrate</name>
    </ligand>
</feature>
<feature type="binding site" evidence="1">
    <location>
        <position position="291"/>
    </location>
    <ligand>
        <name>substrate</name>
    </ligand>
</feature>
<name>SYFM_DICDI</name>
<keyword id="KW-0030">Aminoacyl-tRNA synthetase</keyword>
<keyword id="KW-0067">ATP-binding</keyword>
<keyword id="KW-0436">Ligase</keyword>
<keyword id="KW-0496">Mitochondrion</keyword>
<keyword id="KW-0547">Nucleotide-binding</keyword>
<keyword id="KW-0648">Protein biosynthesis</keyword>
<keyword id="KW-1185">Reference proteome</keyword>
<keyword id="KW-0809">Transit peptide</keyword>
<accession>Q86A68</accession>
<accession>Q556D2</accession>
<gene>
    <name type="primary">mpheS</name>
    <name type="ORF">DDB_G0274371</name>
</gene>
<protein>
    <recommendedName>
        <fullName>Phenylalanine--tRNA ligase, mitochondrial</fullName>
        <ecNumber>6.1.1.20</ecNumber>
    </recommendedName>
    <alternativeName>
        <fullName>Phenylalanyl-tRNA synthetase</fullName>
        <shortName>PheRS</shortName>
    </alternativeName>
</protein>
<proteinExistence type="inferred from homology"/>
<organism>
    <name type="scientific">Dictyostelium discoideum</name>
    <name type="common">Social amoeba</name>
    <dbReference type="NCBI Taxonomy" id="44689"/>
    <lineage>
        <taxon>Eukaryota</taxon>
        <taxon>Amoebozoa</taxon>
        <taxon>Evosea</taxon>
        <taxon>Eumycetozoa</taxon>
        <taxon>Dictyostelia</taxon>
        <taxon>Dictyosteliales</taxon>
        <taxon>Dictyosteliaceae</taxon>
        <taxon>Dictyostelium</taxon>
    </lineage>
</organism>